<sequence>MSQPGRVDKQPGYILHTQPYRETSLLLEVLSRDHGRFSLVARSARRPRSDLRGVLLPFQPLTLSWFGKGELRTLHAADWDGGVRALTGLPLVCGFYLNELMMKLTARDDPEPRAFSVYDRAVRELAGGAPLSTALRRYELRLAQVLGYAPALSRDSRGEAIAADRHYLCRDAALPEPDEHPELAPVGRVVRLPGEALLALDADDYREPATRGHARLLSRVWLSALLGDEPLASRQLLQAIQSLSD</sequence>
<name>RECO_CHRVO</name>
<feature type="chain" id="PRO_0000204945" description="DNA repair protein RecO">
    <location>
        <begin position="1"/>
        <end position="245"/>
    </location>
</feature>
<accession>Q7NWC1</accession>
<protein>
    <recommendedName>
        <fullName evidence="1">DNA repair protein RecO</fullName>
    </recommendedName>
    <alternativeName>
        <fullName evidence="1">Recombination protein O</fullName>
    </alternativeName>
</protein>
<keyword id="KW-0227">DNA damage</keyword>
<keyword id="KW-0233">DNA recombination</keyword>
<keyword id="KW-0234">DNA repair</keyword>
<keyword id="KW-1185">Reference proteome</keyword>
<gene>
    <name evidence="1" type="primary">recO</name>
    <name type="ordered locus">CV_2069</name>
</gene>
<evidence type="ECO:0000255" key="1">
    <source>
        <dbReference type="HAMAP-Rule" id="MF_00201"/>
    </source>
</evidence>
<organism>
    <name type="scientific">Chromobacterium violaceum (strain ATCC 12472 / DSM 30191 / JCM 1249 / CCUG 213 / NBRC 12614 / NCIMB 9131 / NCTC 9757 / MK)</name>
    <dbReference type="NCBI Taxonomy" id="243365"/>
    <lineage>
        <taxon>Bacteria</taxon>
        <taxon>Pseudomonadati</taxon>
        <taxon>Pseudomonadota</taxon>
        <taxon>Betaproteobacteria</taxon>
        <taxon>Neisseriales</taxon>
        <taxon>Chromobacteriaceae</taxon>
        <taxon>Chromobacterium</taxon>
    </lineage>
</organism>
<proteinExistence type="inferred from homology"/>
<reference key="1">
    <citation type="journal article" date="2003" name="Proc. Natl. Acad. Sci. U.S.A.">
        <title>The complete genome sequence of Chromobacterium violaceum reveals remarkable and exploitable bacterial adaptability.</title>
        <authorList>
            <person name="Vasconcelos A.T.R."/>
            <person name="de Almeida D.F."/>
            <person name="Hungria M."/>
            <person name="Guimaraes C.T."/>
            <person name="Antonio R.V."/>
            <person name="Almeida F.C."/>
            <person name="de Almeida L.G.P."/>
            <person name="de Almeida R."/>
            <person name="Alves-Gomes J.A."/>
            <person name="Andrade E.M."/>
            <person name="Araripe J."/>
            <person name="de Araujo M.F.F."/>
            <person name="Astolfi-Filho S."/>
            <person name="Azevedo V."/>
            <person name="Baptista A.J."/>
            <person name="Bataus L.A.M."/>
            <person name="Batista J.S."/>
            <person name="Belo A."/>
            <person name="van den Berg C."/>
            <person name="Bogo M."/>
            <person name="Bonatto S."/>
            <person name="Bordignon J."/>
            <person name="Brigido M.M."/>
            <person name="Brito C.A."/>
            <person name="Brocchi M."/>
            <person name="Burity H.A."/>
            <person name="Camargo A.A."/>
            <person name="Cardoso D.D.P."/>
            <person name="Carneiro N.P."/>
            <person name="Carraro D.M."/>
            <person name="Carvalho C.M.B."/>
            <person name="Cascardo J.C.M."/>
            <person name="Cavada B.S."/>
            <person name="Chueire L.M.O."/>
            <person name="Creczynski-Pasa T.B."/>
            <person name="Cunha-Junior N.C."/>
            <person name="Fagundes N."/>
            <person name="Falcao C.L."/>
            <person name="Fantinatti F."/>
            <person name="Farias I.P."/>
            <person name="Felipe M.S.S."/>
            <person name="Ferrari L.P."/>
            <person name="Ferro J.A."/>
            <person name="Ferro M.I.T."/>
            <person name="Franco G.R."/>
            <person name="Freitas N.S.A."/>
            <person name="Furlan L.R."/>
            <person name="Gazzinelli R.T."/>
            <person name="Gomes E.A."/>
            <person name="Goncalves P.R."/>
            <person name="Grangeiro T.B."/>
            <person name="Grattapaglia D."/>
            <person name="Grisard E.C."/>
            <person name="Hanna E.S."/>
            <person name="Jardim S.N."/>
            <person name="Laurino J."/>
            <person name="Leoi L.C.T."/>
            <person name="Lima L.F.A."/>
            <person name="Loureiro M.F."/>
            <person name="Lyra M.C.C.P."/>
            <person name="Madeira H.M.F."/>
            <person name="Manfio G.P."/>
            <person name="Maranhao A.Q."/>
            <person name="Martins W.S."/>
            <person name="di Mauro S.M.Z."/>
            <person name="de Medeiros S.R.B."/>
            <person name="Meissner R.V."/>
            <person name="Moreira M.A.M."/>
            <person name="Nascimento F.F."/>
            <person name="Nicolas M.F."/>
            <person name="Oliveira J.G."/>
            <person name="Oliveira S.C."/>
            <person name="Paixao R.F.C."/>
            <person name="Parente J.A."/>
            <person name="Pedrosa F.O."/>
            <person name="Pena S.D.J."/>
            <person name="Pereira J.O."/>
            <person name="Pereira M."/>
            <person name="Pinto L.S.R.C."/>
            <person name="Pinto L.S."/>
            <person name="Porto J.I.R."/>
            <person name="Potrich D.P."/>
            <person name="Ramalho-Neto C.E."/>
            <person name="Reis A.M.M."/>
            <person name="Rigo L.U."/>
            <person name="Rondinelli E."/>
            <person name="Santos E.B.P."/>
            <person name="Santos F.R."/>
            <person name="Schneider M.P.C."/>
            <person name="Seuanez H.N."/>
            <person name="Silva A.M.R."/>
            <person name="da Silva A.L.C."/>
            <person name="Silva D.W."/>
            <person name="Silva R."/>
            <person name="Simoes I.C."/>
            <person name="Simon D."/>
            <person name="Soares C.M.A."/>
            <person name="Soares R.B.A."/>
            <person name="Souza E.M."/>
            <person name="Souza K.R.L."/>
            <person name="Souza R.C."/>
            <person name="Steffens M.B.R."/>
            <person name="Steindel M."/>
            <person name="Teixeira S.R."/>
            <person name="Urmenyi T."/>
            <person name="Vettore A."/>
            <person name="Wassem R."/>
            <person name="Zaha A."/>
            <person name="Simpson A.J.G."/>
        </authorList>
    </citation>
    <scope>NUCLEOTIDE SEQUENCE [LARGE SCALE GENOMIC DNA]</scope>
    <source>
        <strain>ATCC 12472 / DSM 30191 / JCM 1249 / CCUG 213 / NBRC 12614 / NCIMB 9131 / NCTC 9757 / MK</strain>
    </source>
</reference>
<comment type="function">
    <text evidence="1">Involved in DNA repair and RecF pathway recombination.</text>
</comment>
<comment type="similarity">
    <text evidence="1">Belongs to the RecO family.</text>
</comment>
<dbReference type="EMBL" id="AE016825">
    <property type="protein sequence ID" value="AAQ59741.1"/>
    <property type="molecule type" value="Genomic_DNA"/>
</dbReference>
<dbReference type="RefSeq" id="WP_011135617.1">
    <property type="nucleotide sequence ID" value="NC_005085.1"/>
</dbReference>
<dbReference type="SMR" id="Q7NWC1"/>
<dbReference type="STRING" id="243365.CV_2069"/>
<dbReference type="KEGG" id="cvi:CV_2069"/>
<dbReference type="eggNOG" id="COG1381">
    <property type="taxonomic scope" value="Bacteria"/>
</dbReference>
<dbReference type="HOGENOM" id="CLU_066645_1_0_4"/>
<dbReference type="OrthoDB" id="9804792at2"/>
<dbReference type="Proteomes" id="UP000001424">
    <property type="component" value="Chromosome"/>
</dbReference>
<dbReference type="GO" id="GO:0043590">
    <property type="term" value="C:bacterial nucleoid"/>
    <property type="evidence" value="ECO:0007669"/>
    <property type="project" value="TreeGrafter"/>
</dbReference>
<dbReference type="GO" id="GO:0006310">
    <property type="term" value="P:DNA recombination"/>
    <property type="evidence" value="ECO:0007669"/>
    <property type="project" value="UniProtKB-UniRule"/>
</dbReference>
<dbReference type="GO" id="GO:0006302">
    <property type="term" value="P:double-strand break repair"/>
    <property type="evidence" value="ECO:0007669"/>
    <property type="project" value="TreeGrafter"/>
</dbReference>
<dbReference type="Gene3D" id="2.40.50.140">
    <property type="entry name" value="Nucleic acid-binding proteins"/>
    <property type="match status" value="1"/>
</dbReference>
<dbReference type="Gene3D" id="1.20.1440.120">
    <property type="entry name" value="Recombination protein O, C-terminal domain"/>
    <property type="match status" value="1"/>
</dbReference>
<dbReference type="HAMAP" id="MF_00201">
    <property type="entry name" value="RecO"/>
    <property type="match status" value="1"/>
</dbReference>
<dbReference type="InterPro" id="IPR037278">
    <property type="entry name" value="ARFGAP/RecO"/>
</dbReference>
<dbReference type="InterPro" id="IPR022572">
    <property type="entry name" value="DNA_rep/recomb_RecO_N"/>
</dbReference>
<dbReference type="InterPro" id="IPR012340">
    <property type="entry name" value="NA-bd_OB-fold"/>
</dbReference>
<dbReference type="InterPro" id="IPR003717">
    <property type="entry name" value="RecO"/>
</dbReference>
<dbReference type="InterPro" id="IPR042242">
    <property type="entry name" value="RecO_C"/>
</dbReference>
<dbReference type="NCBIfam" id="TIGR00613">
    <property type="entry name" value="reco"/>
    <property type="match status" value="1"/>
</dbReference>
<dbReference type="PANTHER" id="PTHR33991">
    <property type="entry name" value="DNA REPAIR PROTEIN RECO"/>
    <property type="match status" value="1"/>
</dbReference>
<dbReference type="PANTHER" id="PTHR33991:SF1">
    <property type="entry name" value="DNA REPAIR PROTEIN RECO"/>
    <property type="match status" value="1"/>
</dbReference>
<dbReference type="Pfam" id="PF02565">
    <property type="entry name" value="RecO_C"/>
    <property type="match status" value="1"/>
</dbReference>
<dbReference type="Pfam" id="PF11967">
    <property type="entry name" value="RecO_N"/>
    <property type="match status" value="1"/>
</dbReference>
<dbReference type="SUPFAM" id="SSF57863">
    <property type="entry name" value="ArfGap/RecO-like zinc finger"/>
    <property type="match status" value="1"/>
</dbReference>
<dbReference type="SUPFAM" id="SSF50249">
    <property type="entry name" value="Nucleic acid-binding proteins"/>
    <property type="match status" value="1"/>
</dbReference>